<accession>Q5R7U8</accession>
<evidence type="ECO:0000250" key="1"/>
<evidence type="ECO:0000305" key="2"/>
<protein>
    <recommendedName>
        <fullName>TATA box-binding protein-like 1</fullName>
        <shortName>TBP-like 1</shortName>
    </recommendedName>
    <alternativeName>
        <fullName>TATA box-binding protein-related factor 2</fullName>
        <shortName>TBP-related factor 2</shortName>
    </alternativeName>
    <alternativeName>
        <fullName>TBP-like factor</fullName>
    </alternativeName>
    <alternativeName>
        <fullName>TBP-related protein</fullName>
    </alternativeName>
</protein>
<proteinExistence type="evidence at transcript level"/>
<keyword id="KW-0963">Cytoplasm</keyword>
<keyword id="KW-0238">DNA-binding</keyword>
<keyword id="KW-0539">Nucleus</keyword>
<keyword id="KW-1185">Reference proteome</keyword>
<keyword id="KW-0804">Transcription</keyword>
<keyword id="KW-0805">Transcription regulation</keyword>
<organism>
    <name type="scientific">Pongo abelii</name>
    <name type="common">Sumatran orangutan</name>
    <name type="synonym">Pongo pygmaeus abelii</name>
    <dbReference type="NCBI Taxonomy" id="9601"/>
    <lineage>
        <taxon>Eukaryota</taxon>
        <taxon>Metazoa</taxon>
        <taxon>Chordata</taxon>
        <taxon>Craniata</taxon>
        <taxon>Vertebrata</taxon>
        <taxon>Euteleostomi</taxon>
        <taxon>Mammalia</taxon>
        <taxon>Eutheria</taxon>
        <taxon>Euarchontoglires</taxon>
        <taxon>Primates</taxon>
        <taxon>Haplorrhini</taxon>
        <taxon>Catarrhini</taxon>
        <taxon>Hominidae</taxon>
        <taxon>Pongo</taxon>
    </lineage>
</organism>
<dbReference type="EMBL" id="CR860011">
    <property type="protein sequence ID" value="CAH92162.1"/>
    <property type="molecule type" value="mRNA"/>
</dbReference>
<dbReference type="RefSeq" id="NP_001126267.1">
    <property type="nucleotide sequence ID" value="NM_001132795.1"/>
</dbReference>
<dbReference type="RefSeq" id="XP_024103679.1">
    <property type="nucleotide sequence ID" value="XM_024247911.3"/>
</dbReference>
<dbReference type="SMR" id="Q5R7U8"/>
<dbReference type="FunCoup" id="Q5R7U8">
    <property type="interactions" value="1173"/>
</dbReference>
<dbReference type="STRING" id="9601.ENSPPYP00000019061"/>
<dbReference type="Ensembl" id="ENSPPYT00000019812.3">
    <property type="protein sequence ID" value="ENSPPYP00000019061.3"/>
    <property type="gene ID" value="ENSPPYG00000017023.3"/>
</dbReference>
<dbReference type="GeneID" id="100173239"/>
<dbReference type="KEGG" id="pon:100173239"/>
<dbReference type="CTD" id="9519"/>
<dbReference type="eggNOG" id="KOG3302">
    <property type="taxonomic scope" value="Eukaryota"/>
</dbReference>
<dbReference type="GeneTree" id="ENSGT00940000155712"/>
<dbReference type="InParanoid" id="Q5R7U8"/>
<dbReference type="OMA" id="NCEYEPE"/>
<dbReference type="OrthoDB" id="2127950at2759"/>
<dbReference type="Proteomes" id="UP000001595">
    <property type="component" value="Chromosome 6"/>
</dbReference>
<dbReference type="GO" id="GO:0005737">
    <property type="term" value="C:cytoplasm"/>
    <property type="evidence" value="ECO:0007669"/>
    <property type="project" value="UniProtKB-SubCell"/>
</dbReference>
<dbReference type="GO" id="GO:0001673">
    <property type="term" value="C:male germ cell nucleus"/>
    <property type="evidence" value="ECO:0007669"/>
    <property type="project" value="Ensembl"/>
</dbReference>
<dbReference type="GO" id="GO:0005672">
    <property type="term" value="C:transcription factor TFIIA complex"/>
    <property type="evidence" value="ECO:0007669"/>
    <property type="project" value="Ensembl"/>
</dbReference>
<dbReference type="GO" id="GO:0000979">
    <property type="term" value="F:RNA polymerase II core promoter sequence-specific DNA binding"/>
    <property type="evidence" value="ECO:0007669"/>
    <property type="project" value="Ensembl"/>
</dbReference>
<dbReference type="GO" id="GO:0016251">
    <property type="term" value="F:RNA polymerase II general transcription initiation factor activity"/>
    <property type="evidence" value="ECO:0007669"/>
    <property type="project" value="Ensembl"/>
</dbReference>
<dbReference type="GO" id="GO:0001675">
    <property type="term" value="P:acrosome assembly"/>
    <property type="evidence" value="ECO:0007669"/>
    <property type="project" value="Ensembl"/>
</dbReference>
<dbReference type="GO" id="GO:0006352">
    <property type="term" value="P:DNA-templated transcription initiation"/>
    <property type="evidence" value="ECO:0007669"/>
    <property type="project" value="InterPro"/>
</dbReference>
<dbReference type="GO" id="GO:0006235">
    <property type="term" value="P:dTTP biosynthetic process"/>
    <property type="evidence" value="ECO:0007669"/>
    <property type="project" value="Ensembl"/>
</dbReference>
<dbReference type="GO" id="GO:0007289">
    <property type="term" value="P:spermatid nucleus differentiation"/>
    <property type="evidence" value="ECO:0007669"/>
    <property type="project" value="Ensembl"/>
</dbReference>
<dbReference type="CDD" id="cd04517">
    <property type="entry name" value="TLF"/>
    <property type="match status" value="1"/>
</dbReference>
<dbReference type="FunFam" id="3.30.310.10:FF:000005">
    <property type="entry name" value="TATA box-binding protein-like 1"/>
    <property type="match status" value="1"/>
</dbReference>
<dbReference type="FunFam" id="3.30.310.10:FF:000009">
    <property type="entry name" value="TatA box-binding protein-like protein 1"/>
    <property type="match status" value="1"/>
</dbReference>
<dbReference type="Gene3D" id="3.30.310.10">
    <property type="entry name" value="TATA-Binding Protein"/>
    <property type="match status" value="2"/>
</dbReference>
<dbReference type="InterPro" id="IPR000814">
    <property type="entry name" value="TBP"/>
</dbReference>
<dbReference type="InterPro" id="IPR015445">
    <property type="entry name" value="TBP-like"/>
</dbReference>
<dbReference type="InterPro" id="IPR012295">
    <property type="entry name" value="TBP_dom_sf"/>
</dbReference>
<dbReference type="PANTHER" id="PTHR10126">
    <property type="entry name" value="TATA-BOX BINDING PROTEIN"/>
    <property type="match status" value="1"/>
</dbReference>
<dbReference type="Pfam" id="PF00352">
    <property type="entry name" value="TBP"/>
    <property type="match status" value="2"/>
</dbReference>
<dbReference type="PRINTS" id="PR00686">
    <property type="entry name" value="TIFACTORIID"/>
</dbReference>
<dbReference type="SUPFAM" id="SSF55945">
    <property type="entry name" value="TATA-box binding protein-like"/>
    <property type="match status" value="2"/>
</dbReference>
<feature type="chain" id="PRO_0000293549" description="TATA box-binding protein-like 1">
    <location>
        <begin position="1"/>
        <end position="190"/>
    </location>
</feature>
<comment type="function">
    <text evidence="1">Part of a specialized transcription system that mediates the transcription of most ribosomal proteins through the 5'-TCT-3' motif which is a core promoter element at these genes. Seems to also mediate the transcription of NF1. Does not bind the TATA box (By similarity).</text>
</comment>
<comment type="subunit">
    <text evidence="1">Binds TFIIA and TFIIB.</text>
</comment>
<comment type="subcellular location">
    <subcellularLocation>
        <location evidence="1">Cytoplasm</location>
    </subcellularLocation>
    <subcellularLocation>
        <location evidence="1">Nucleus</location>
    </subcellularLocation>
</comment>
<comment type="similarity">
    <text evidence="2">Belongs to the TBP family.</text>
</comment>
<sequence length="190" mass="21323">MDADSDVALDILITNVVCVFRTRCHLNLRKIALEGANVIYKRDVGKVLMKLRKPRITATIWSSGKIICTGATSEEEAKFGARRLARSLQKLGFQVIFTDFKVVNVLAVCNMPFEIRLPEFTKNNRPHASYEPELHPAVCYRIKSLRATLQIFSTGSITVTGPNVKAVATAVEQIYPFVFESRKEILSFTT</sequence>
<gene>
    <name type="primary">TBPL1</name>
    <name type="synonym">TLF</name>
    <name type="synonym">TLP</name>
    <name type="synonym">TRF2</name>
    <name type="synonym">TRP</name>
</gene>
<reference key="1">
    <citation type="submission" date="2004-11" db="EMBL/GenBank/DDBJ databases">
        <authorList>
            <consortium name="The German cDNA consortium"/>
        </authorList>
    </citation>
    <scope>NUCLEOTIDE SEQUENCE [LARGE SCALE MRNA]</scope>
    <source>
        <tissue>Brain cortex</tissue>
    </source>
</reference>
<name>TBPL1_PONAB</name>